<keyword id="KW-0067">ATP-binding</keyword>
<keyword id="KW-0547">Nucleotide-binding</keyword>
<keyword id="KW-1185">Reference proteome</keyword>
<keyword id="KW-0808">Transferase</keyword>
<keyword id="KW-0833">Ubl conjugation pathway</keyword>
<name>UBC16_SCHPO</name>
<protein>
    <recommendedName>
        <fullName>Ubiquitin-conjugating enzyme E2 16</fullName>
        <ecNumber>2.3.2.23</ecNumber>
    </recommendedName>
    <alternativeName>
        <fullName>E2 ubiquitin-conjugating enzyme 16</fullName>
    </alternativeName>
    <alternativeName>
        <fullName>Ubiquitin carrier protein 16</fullName>
    </alternativeName>
    <alternativeName>
        <fullName>Ubiquitin-protein ligase 16</fullName>
    </alternativeName>
</protein>
<comment type="function">
    <text evidence="1">Catalyzes the covalent attachment of ubiquitin to other proteins.</text>
</comment>
<comment type="catalytic activity">
    <reaction evidence="1">
        <text>S-ubiquitinyl-[E1 ubiquitin-activating enzyme]-L-cysteine + [E2 ubiquitin-conjugating enzyme]-L-cysteine = [E1 ubiquitin-activating enzyme]-L-cysteine + S-ubiquitinyl-[E2 ubiquitin-conjugating enzyme]-L-cysteine.</text>
        <dbReference type="EC" id="2.3.2.23"/>
    </reaction>
</comment>
<comment type="pathway">
    <text evidence="1">Protein modification; protein ubiquitination.</text>
</comment>
<comment type="similarity">
    <text evidence="1">Belongs to the ubiquitin-conjugating enzyme family.</text>
</comment>
<organism>
    <name type="scientific">Schizosaccharomyces pombe (strain 972 / ATCC 24843)</name>
    <name type="common">Fission yeast</name>
    <dbReference type="NCBI Taxonomy" id="284812"/>
    <lineage>
        <taxon>Eukaryota</taxon>
        <taxon>Fungi</taxon>
        <taxon>Dikarya</taxon>
        <taxon>Ascomycota</taxon>
        <taxon>Taphrinomycotina</taxon>
        <taxon>Schizosaccharomycetes</taxon>
        <taxon>Schizosaccharomycetales</taxon>
        <taxon>Schizosaccharomycetaceae</taxon>
        <taxon>Schizosaccharomyces</taxon>
    </lineage>
</organism>
<proteinExistence type="inferred from homology"/>
<gene>
    <name type="primary">ubc16</name>
    <name type="ORF">SPBC1198.09</name>
</gene>
<accession>Q9P6I1</accession>
<sequence length="160" mass="17842">MNSSIKRLHKEYASFQAGDISGLLLLKPVTDVDMFHWKAVIEGPTETPYEGGQWVLDIHVHEGYPISPPSVYFQTKIVHPNISWTNGEVCMDILKTHWSPAWSLQSACLAIISLLSNYDASSPLNVDAAKLLRTGDKTAYNSLVRCTTYLYAKGKIEDLS</sequence>
<feature type="chain" id="PRO_0000082590" description="Ubiquitin-conjugating enzyme E2 16">
    <location>
        <begin position="1"/>
        <end position="160"/>
    </location>
</feature>
<feature type="domain" description="UBC core" evidence="1">
    <location>
        <begin position="3"/>
        <end position="153"/>
    </location>
</feature>
<feature type="active site" description="Glycyl thioester intermediate" evidence="1">
    <location>
        <position position="90"/>
    </location>
</feature>
<reference key="1">
    <citation type="journal article" date="2002" name="Nature">
        <title>The genome sequence of Schizosaccharomyces pombe.</title>
        <authorList>
            <person name="Wood V."/>
            <person name="Gwilliam R."/>
            <person name="Rajandream M.A."/>
            <person name="Lyne M.H."/>
            <person name="Lyne R."/>
            <person name="Stewart A."/>
            <person name="Sgouros J.G."/>
            <person name="Peat N."/>
            <person name="Hayles J."/>
            <person name="Baker S.G."/>
            <person name="Basham D."/>
            <person name="Bowman S."/>
            <person name="Brooks K."/>
            <person name="Brown D."/>
            <person name="Brown S."/>
            <person name="Chillingworth T."/>
            <person name="Churcher C.M."/>
            <person name="Collins M."/>
            <person name="Connor R."/>
            <person name="Cronin A."/>
            <person name="Davis P."/>
            <person name="Feltwell T."/>
            <person name="Fraser A."/>
            <person name="Gentles S."/>
            <person name="Goble A."/>
            <person name="Hamlin N."/>
            <person name="Harris D.E."/>
            <person name="Hidalgo J."/>
            <person name="Hodgson G."/>
            <person name="Holroyd S."/>
            <person name="Hornsby T."/>
            <person name="Howarth S."/>
            <person name="Huckle E.J."/>
            <person name="Hunt S."/>
            <person name="Jagels K."/>
            <person name="James K.D."/>
            <person name="Jones L."/>
            <person name="Jones M."/>
            <person name="Leather S."/>
            <person name="McDonald S."/>
            <person name="McLean J."/>
            <person name="Mooney P."/>
            <person name="Moule S."/>
            <person name="Mungall K.L."/>
            <person name="Murphy L.D."/>
            <person name="Niblett D."/>
            <person name="Odell C."/>
            <person name="Oliver K."/>
            <person name="O'Neil S."/>
            <person name="Pearson D."/>
            <person name="Quail M.A."/>
            <person name="Rabbinowitsch E."/>
            <person name="Rutherford K.M."/>
            <person name="Rutter S."/>
            <person name="Saunders D."/>
            <person name="Seeger K."/>
            <person name="Sharp S."/>
            <person name="Skelton J."/>
            <person name="Simmonds M.N."/>
            <person name="Squares R."/>
            <person name="Squares S."/>
            <person name="Stevens K."/>
            <person name="Taylor K."/>
            <person name="Taylor R.G."/>
            <person name="Tivey A."/>
            <person name="Walsh S.V."/>
            <person name="Warren T."/>
            <person name="Whitehead S."/>
            <person name="Woodward J.R."/>
            <person name="Volckaert G."/>
            <person name="Aert R."/>
            <person name="Robben J."/>
            <person name="Grymonprez B."/>
            <person name="Weltjens I."/>
            <person name="Vanstreels E."/>
            <person name="Rieger M."/>
            <person name="Schaefer M."/>
            <person name="Mueller-Auer S."/>
            <person name="Gabel C."/>
            <person name="Fuchs M."/>
            <person name="Duesterhoeft A."/>
            <person name="Fritzc C."/>
            <person name="Holzer E."/>
            <person name="Moestl D."/>
            <person name="Hilbert H."/>
            <person name="Borzym K."/>
            <person name="Langer I."/>
            <person name="Beck A."/>
            <person name="Lehrach H."/>
            <person name="Reinhardt R."/>
            <person name="Pohl T.M."/>
            <person name="Eger P."/>
            <person name="Zimmermann W."/>
            <person name="Wedler H."/>
            <person name="Wambutt R."/>
            <person name="Purnelle B."/>
            <person name="Goffeau A."/>
            <person name="Cadieu E."/>
            <person name="Dreano S."/>
            <person name="Gloux S."/>
            <person name="Lelaure V."/>
            <person name="Mottier S."/>
            <person name="Galibert F."/>
            <person name="Aves S.J."/>
            <person name="Xiang Z."/>
            <person name="Hunt C."/>
            <person name="Moore K."/>
            <person name="Hurst S.M."/>
            <person name="Lucas M."/>
            <person name="Rochet M."/>
            <person name="Gaillardin C."/>
            <person name="Tallada V.A."/>
            <person name="Garzon A."/>
            <person name="Thode G."/>
            <person name="Daga R.R."/>
            <person name="Cruzado L."/>
            <person name="Jimenez J."/>
            <person name="Sanchez M."/>
            <person name="del Rey F."/>
            <person name="Benito J."/>
            <person name="Dominguez A."/>
            <person name="Revuelta J.L."/>
            <person name="Moreno S."/>
            <person name="Armstrong J."/>
            <person name="Forsburg S.L."/>
            <person name="Cerutti L."/>
            <person name="Lowe T."/>
            <person name="McCombie W.R."/>
            <person name="Paulsen I."/>
            <person name="Potashkin J."/>
            <person name="Shpakovski G.V."/>
            <person name="Ussery D."/>
            <person name="Barrell B.G."/>
            <person name="Nurse P."/>
        </authorList>
    </citation>
    <scope>NUCLEOTIDE SEQUENCE [LARGE SCALE GENOMIC DNA]</scope>
    <source>
        <strain>972 / ATCC 24843</strain>
    </source>
</reference>
<dbReference type="EC" id="2.3.2.23"/>
<dbReference type="EMBL" id="CU329671">
    <property type="protein sequence ID" value="CAB91184.2"/>
    <property type="molecule type" value="Genomic_DNA"/>
</dbReference>
<dbReference type="RefSeq" id="NP_595078.1">
    <property type="nucleotide sequence ID" value="NM_001020984.2"/>
</dbReference>
<dbReference type="SMR" id="Q9P6I1"/>
<dbReference type="BioGRID" id="276505">
    <property type="interactions" value="20"/>
</dbReference>
<dbReference type="FunCoup" id="Q9P6I1">
    <property type="interactions" value="283"/>
</dbReference>
<dbReference type="STRING" id="284812.Q9P6I1"/>
<dbReference type="iPTMnet" id="Q9P6I1"/>
<dbReference type="PaxDb" id="4896-SPBC1198.09.1"/>
<dbReference type="EnsemblFungi" id="SPBC1198.09.1">
    <property type="protein sequence ID" value="SPBC1198.09.1:pep"/>
    <property type="gene ID" value="SPBC1198.09"/>
</dbReference>
<dbReference type="GeneID" id="2539961"/>
<dbReference type="KEGG" id="spo:2539961"/>
<dbReference type="PomBase" id="SPBC1198.09">
    <property type="gene designation" value="ubc16"/>
</dbReference>
<dbReference type="VEuPathDB" id="FungiDB:SPBC1198.09"/>
<dbReference type="eggNOG" id="KOG0417">
    <property type="taxonomic scope" value="Eukaryota"/>
</dbReference>
<dbReference type="HOGENOM" id="CLU_030988_13_0_1"/>
<dbReference type="InParanoid" id="Q9P6I1"/>
<dbReference type="OMA" id="WRAVMKG"/>
<dbReference type="PhylomeDB" id="Q9P6I1"/>
<dbReference type="UniPathway" id="UPA00143"/>
<dbReference type="PRO" id="PR:Q9P6I1"/>
<dbReference type="Proteomes" id="UP000002485">
    <property type="component" value="Chromosome II"/>
</dbReference>
<dbReference type="GO" id="GO:0005634">
    <property type="term" value="C:nucleus"/>
    <property type="evidence" value="ECO:0000318"/>
    <property type="project" value="GO_Central"/>
</dbReference>
<dbReference type="GO" id="GO:0005524">
    <property type="term" value="F:ATP binding"/>
    <property type="evidence" value="ECO:0007669"/>
    <property type="project" value="UniProtKB-KW"/>
</dbReference>
<dbReference type="GO" id="GO:0061631">
    <property type="term" value="F:ubiquitin conjugating enzyme activity"/>
    <property type="evidence" value="ECO:0000318"/>
    <property type="project" value="GO_Central"/>
</dbReference>
<dbReference type="GO" id="GO:0016558">
    <property type="term" value="P:protein import into peroxisome matrix"/>
    <property type="evidence" value="ECO:0000266"/>
    <property type="project" value="PomBase"/>
</dbReference>
<dbReference type="GO" id="GO:0000209">
    <property type="term" value="P:protein polyubiquitination"/>
    <property type="evidence" value="ECO:0000318"/>
    <property type="project" value="GO_Central"/>
</dbReference>
<dbReference type="CDD" id="cd23812">
    <property type="entry name" value="UBCc_ScPEX4-like"/>
    <property type="match status" value="1"/>
</dbReference>
<dbReference type="FunFam" id="3.10.110.10:FF:000098">
    <property type="entry name" value="Ubiquitin conjugating enzyme (UbcJ)"/>
    <property type="match status" value="1"/>
</dbReference>
<dbReference type="Gene3D" id="3.10.110.10">
    <property type="entry name" value="Ubiquitin Conjugating Enzyme"/>
    <property type="match status" value="1"/>
</dbReference>
<dbReference type="InterPro" id="IPR050113">
    <property type="entry name" value="Ub_conjugating_enzyme"/>
</dbReference>
<dbReference type="InterPro" id="IPR000608">
    <property type="entry name" value="UBQ-conjugat_E2_core"/>
</dbReference>
<dbReference type="InterPro" id="IPR016135">
    <property type="entry name" value="UBQ-conjugating_enzyme/RWD"/>
</dbReference>
<dbReference type="PANTHER" id="PTHR24067">
    <property type="entry name" value="UBIQUITIN-CONJUGATING ENZYME E2"/>
    <property type="match status" value="1"/>
</dbReference>
<dbReference type="Pfam" id="PF00179">
    <property type="entry name" value="UQ_con"/>
    <property type="match status" value="1"/>
</dbReference>
<dbReference type="SMART" id="SM00212">
    <property type="entry name" value="UBCc"/>
    <property type="match status" value="1"/>
</dbReference>
<dbReference type="SUPFAM" id="SSF54495">
    <property type="entry name" value="UBC-like"/>
    <property type="match status" value="1"/>
</dbReference>
<dbReference type="PROSITE" id="PS50127">
    <property type="entry name" value="UBC_2"/>
    <property type="match status" value="1"/>
</dbReference>
<evidence type="ECO:0000255" key="1">
    <source>
        <dbReference type="PROSITE-ProRule" id="PRU00388"/>
    </source>
</evidence>